<feature type="chain" id="PRO_1000126446" description="Small ribosomal subunit protein bS20">
    <location>
        <begin position="1"/>
        <end position="87"/>
    </location>
</feature>
<feature type="region of interest" description="Disordered" evidence="2">
    <location>
        <begin position="1"/>
        <end position="27"/>
    </location>
</feature>
<sequence>MANIKSAKKRAVTSEKRRKHNASRRSMMRTFIKKVYAAIATGDKAAAQNAFNEMQPLVDRQAAKGLIHKNKAARHKANLTAQISKMA</sequence>
<organism>
    <name type="scientific">Erwinia tasmaniensis (strain DSM 17950 / CFBP 7177 / CIP 109463 / NCPPB 4357 / Et1/99)</name>
    <dbReference type="NCBI Taxonomy" id="465817"/>
    <lineage>
        <taxon>Bacteria</taxon>
        <taxon>Pseudomonadati</taxon>
        <taxon>Pseudomonadota</taxon>
        <taxon>Gammaproteobacteria</taxon>
        <taxon>Enterobacterales</taxon>
        <taxon>Erwiniaceae</taxon>
        <taxon>Erwinia</taxon>
    </lineage>
</organism>
<evidence type="ECO:0000255" key="1">
    <source>
        <dbReference type="HAMAP-Rule" id="MF_00500"/>
    </source>
</evidence>
<evidence type="ECO:0000256" key="2">
    <source>
        <dbReference type="SAM" id="MobiDB-lite"/>
    </source>
</evidence>
<evidence type="ECO:0000305" key="3"/>
<comment type="function">
    <text evidence="1">Binds directly to 16S ribosomal RNA.</text>
</comment>
<comment type="similarity">
    <text evidence="1">Belongs to the bacterial ribosomal protein bS20 family.</text>
</comment>
<reference key="1">
    <citation type="journal article" date="2008" name="Environ. Microbiol.">
        <title>The genome of Erwinia tasmaniensis strain Et1/99, a non-pathogenic bacterium in the genus Erwinia.</title>
        <authorList>
            <person name="Kube M."/>
            <person name="Migdoll A.M."/>
            <person name="Mueller I."/>
            <person name="Kuhl H."/>
            <person name="Beck A."/>
            <person name="Reinhardt R."/>
            <person name="Geider K."/>
        </authorList>
    </citation>
    <scope>NUCLEOTIDE SEQUENCE [LARGE SCALE GENOMIC DNA]</scope>
    <source>
        <strain>DSM 17950 / CFBP 7177 / CIP 109463 / NCPPB 4357 / Et1/99</strain>
    </source>
</reference>
<accession>B2VGR4</accession>
<gene>
    <name evidence="1" type="primary">rpsT</name>
    <name type="ordered locus">ETA_07100</name>
</gene>
<protein>
    <recommendedName>
        <fullName evidence="1">Small ribosomal subunit protein bS20</fullName>
    </recommendedName>
    <alternativeName>
        <fullName evidence="3">30S ribosomal protein S20</fullName>
    </alternativeName>
</protein>
<name>RS20_ERWT9</name>
<proteinExistence type="inferred from homology"/>
<dbReference type="EMBL" id="CU468135">
    <property type="protein sequence ID" value="CAO95756.1"/>
    <property type="molecule type" value="Genomic_DNA"/>
</dbReference>
<dbReference type="RefSeq" id="WP_012440458.1">
    <property type="nucleotide sequence ID" value="NC_010694.1"/>
</dbReference>
<dbReference type="SMR" id="B2VGR4"/>
<dbReference type="STRING" id="465817.ETA_07100"/>
<dbReference type="KEGG" id="eta:ETA_07100"/>
<dbReference type="eggNOG" id="COG0268">
    <property type="taxonomic scope" value="Bacteria"/>
</dbReference>
<dbReference type="HOGENOM" id="CLU_160655_4_0_6"/>
<dbReference type="OrthoDB" id="9807974at2"/>
<dbReference type="Proteomes" id="UP000001726">
    <property type="component" value="Chromosome"/>
</dbReference>
<dbReference type="GO" id="GO:0005829">
    <property type="term" value="C:cytosol"/>
    <property type="evidence" value="ECO:0007669"/>
    <property type="project" value="TreeGrafter"/>
</dbReference>
<dbReference type="GO" id="GO:0015935">
    <property type="term" value="C:small ribosomal subunit"/>
    <property type="evidence" value="ECO:0007669"/>
    <property type="project" value="TreeGrafter"/>
</dbReference>
<dbReference type="GO" id="GO:0070181">
    <property type="term" value="F:small ribosomal subunit rRNA binding"/>
    <property type="evidence" value="ECO:0007669"/>
    <property type="project" value="TreeGrafter"/>
</dbReference>
<dbReference type="GO" id="GO:0003735">
    <property type="term" value="F:structural constituent of ribosome"/>
    <property type="evidence" value="ECO:0007669"/>
    <property type="project" value="InterPro"/>
</dbReference>
<dbReference type="GO" id="GO:0006412">
    <property type="term" value="P:translation"/>
    <property type="evidence" value="ECO:0007669"/>
    <property type="project" value="UniProtKB-UniRule"/>
</dbReference>
<dbReference type="FunFam" id="1.20.58.110:FF:000001">
    <property type="entry name" value="30S ribosomal protein S20"/>
    <property type="match status" value="1"/>
</dbReference>
<dbReference type="Gene3D" id="1.20.58.110">
    <property type="entry name" value="Ribosomal protein S20"/>
    <property type="match status" value="1"/>
</dbReference>
<dbReference type="HAMAP" id="MF_00500">
    <property type="entry name" value="Ribosomal_bS20"/>
    <property type="match status" value="1"/>
</dbReference>
<dbReference type="InterPro" id="IPR002583">
    <property type="entry name" value="Ribosomal_bS20"/>
</dbReference>
<dbReference type="InterPro" id="IPR036510">
    <property type="entry name" value="Ribosomal_bS20_sf"/>
</dbReference>
<dbReference type="NCBIfam" id="TIGR00029">
    <property type="entry name" value="S20"/>
    <property type="match status" value="1"/>
</dbReference>
<dbReference type="PANTHER" id="PTHR33398">
    <property type="entry name" value="30S RIBOSOMAL PROTEIN S20"/>
    <property type="match status" value="1"/>
</dbReference>
<dbReference type="PANTHER" id="PTHR33398:SF1">
    <property type="entry name" value="SMALL RIBOSOMAL SUBUNIT PROTEIN BS20C"/>
    <property type="match status" value="1"/>
</dbReference>
<dbReference type="Pfam" id="PF01649">
    <property type="entry name" value="Ribosomal_S20p"/>
    <property type="match status" value="1"/>
</dbReference>
<dbReference type="SUPFAM" id="SSF46992">
    <property type="entry name" value="Ribosomal protein S20"/>
    <property type="match status" value="1"/>
</dbReference>
<keyword id="KW-1185">Reference proteome</keyword>
<keyword id="KW-0687">Ribonucleoprotein</keyword>
<keyword id="KW-0689">Ribosomal protein</keyword>
<keyword id="KW-0694">RNA-binding</keyword>
<keyword id="KW-0699">rRNA-binding</keyword>